<feature type="chain" id="PRO_0000138334" description="UvrABC system protein C">
    <location>
        <begin position="1"/>
        <end position="610"/>
    </location>
</feature>
<feature type="domain" description="GIY-YIG" evidence="1">
    <location>
        <begin position="16"/>
        <end position="94"/>
    </location>
</feature>
<feature type="domain" description="UVR" evidence="1">
    <location>
        <begin position="204"/>
        <end position="239"/>
    </location>
</feature>
<feature type="sequence conflict" description="In Ref. 2; AAC08301." evidence="2" ref="2">
    <original>D</original>
    <variation>N</variation>
    <location>
        <position position="251"/>
    </location>
</feature>
<feature type="sequence conflict" description="In Ref. 2." evidence="2" ref="2">
    <original>S</original>
    <variation>T</variation>
    <location>
        <position position="279"/>
    </location>
</feature>
<feature type="sequence conflict" description="In Ref. 2." evidence="2" ref="2">
    <original>S</original>
    <variation>T</variation>
    <location>
        <position position="281"/>
    </location>
</feature>
<feature type="sequence conflict" description="In Ref. 2; AAC08301." evidence="2" ref="2">
    <original>S</original>
    <variation>T</variation>
    <location>
        <position position="381"/>
    </location>
</feature>
<feature type="sequence conflict" description="In Ref. 2; AAC08301." evidence="2" ref="2">
    <original>A</original>
    <variation>P</variation>
    <location>
        <position position="410"/>
    </location>
</feature>
<feature type="sequence conflict" description="In Ref. 2; AAC08301." evidence="2" ref="2">
    <original>E</original>
    <variation>K</variation>
    <location>
        <position position="455"/>
    </location>
</feature>
<feature type="sequence conflict" description="In Ref. 2; AAC08301." evidence="2" ref="2">
    <original>E</original>
    <variation>K</variation>
    <location>
        <position position="588"/>
    </location>
</feature>
<feature type="sequence conflict" description="In Ref. 2; AAC08301." evidence="2" ref="2">
    <original>E</original>
    <variation>K</variation>
    <location>
        <position position="602"/>
    </location>
</feature>
<feature type="sequence conflict" description="In Ref. 2." evidence="2" ref="2">
    <original>FWSL</original>
    <variation>RSRE</variation>
    <location>
        <begin position="605"/>
        <end position="608"/>
    </location>
</feature>
<comment type="function">
    <text evidence="1">The UvrABC repair system catalyzes the recognition and processing of DNA lesions. UvrC both incises the 5' and 3' sides of the lesion. The N-terminal half is responsible for the 3' incision and the C-terminal half is responsible for the 5' incision.</text>
</comment>
<comment type="subunit">
    <text evidence="1">Interacts with UvrB in an incision complex.</text>
</comment>
<comment type="subcellular location">
    <subcellularLocation>
        <location evidence="1">Cytoplasm</location>
    </subcellularLocation>
</comment>
<comment type="similarity">
    <text evidence="1">Belongs to the UvrC family.</text>
</comment>
<reference key="1">
    <citation type="journal article" date="2001" name="Nature">
        <title>Complete genome sequence of Salmonella enterica serovar Typhimurium LT2.</title>
        <authorList>
            <person name="McClelland M."/>
            <person name="Sanderson K.E."/>
            <person name="Spieth J."/>
            <person name="Clifton S.W."/>
            <person name="Latreille P."/>
            <person name="Courtney L."/>
            <person name="Porwollik S."/>
            <person name="Ali J."/>
            <person name="Dante M."/>
            <person name="Du F."/>
            <person name="Hou S."/>
            <person name="Layman D."/>
            <person name="Leonard S."/>
            <person name="Nguyen C."/>
            <person name="Scott K."/>
            <person name="Holmes A."/>
            <person name="Grewal N."/>
            <person name="Mulvaney E."/>
            <person name="Ryan E."/>
            <person name="Sun H."/>
            <person name="Florea L."/>
            <person name="Miller W."/>
            <person name="Stoneking T."/>
            <person name="Nhan M."/>
            <person name="Waterston R."/>
            <person name="Wilson R.K."/>
        </authorList>
    </citation>
    <scope>NUCLEOTIDE SEQUENCE [LARGE SCALE GENOMIC DNA]</scope>
    <source>
        <strain>LT2 / SGSC1412 / ATCC 700720</strain>
    </source>
</reference>
<reference key="2">
    <citation type="journal article" date="1998" name="J. Bacteriol.">
        <title>Salmonella typhimurium encodes an SdiA homolog, a putative quorum sensor of the LuxR family, that regulates genes on the virulence plasmid.</title>
        <authorList>
            <person name="Ahmer B.M."/>
            <person name="van Reeuwijk J."/>
            <person name="Timmers C.D."/>
            <person name="Valentine P.J."/>
            <person name="Heffron F."/>
        </authorList>
    </citation>
    <scope>NUCLEOTIDE SEQUENCE [GENOMIC DNA] OF 1-608</scope>
    <source>
        <strain>ATCC 14028 / SGSG 2980 / CDC 6516-60 / NCTC 12023</strain>
    </source>
</reference>
<keyword id="KW-0963">Cytoplasm</keyword>
<keyword id="KW-0227">DNA damage</keyword>
<keyword id="KW-0228">DNA excision</keyword>
<keyword id="KW-0234">DNA repair</keyword>
<keyword id="KW-0267">Excision nuclease</keyword>
<keyword id="KW-1185">Reference proteome</keyword>
<keyword id="KW-0742">SOS response</keyword>
<protein>
    <recommendedName>
        <fullName evidence="1">UvrABC system protein C</fullName>
        <shortName evidence="1">Protein UvrC</shortName>
    </recommendedName>
    <alternativeName>
        <fullName evidence="1">Excinuclease ABC subunit C</fullName>
    </alternativeName>
</protein>
<proteinExistence type="inferred from homology"/>
<accession>O66041</accession>
<name>UVRC_SALTY</name>
<gene>
    <name evidence="1" type="primary">uvrC</name>
    <name type="ordered locus">STM1946</name>
</gene>
<dbReference type="EMBL" id="AE006468">
    <property type="protein sequence ID" value="AAL20858.1"/>
    <property type="molecule type" value="Genomic_DNA"/>
</dbReference>
<dbReference type="EMBL" id="U88651">
    <property type="protein sequence ID" value="AAC08301.1"/>
    <property type="molecule type" value="Genomic_DNA"/>
</dbReference>
<dbReference type="RefSeq" id="NP_460899.1">
    <property type="nucleotide sequence ID" value="NC_003197.2"/>
</dbReference>
<dbReference type="RefSeq" id="WP_001289461.1">
    <property type="nucleotide sequence ID" value="NC_003197.2"/>
</dbReference>
<dbReference type="SMR" id="O66041"/>
<dbReference type="STRING" id="99287.STM1946"/>
<dbReference type="PaxDb" id="99287-STM1946"/>
<dbReference type="GeneID" id="1253467"/>
<dbReference type="KEGG" id="stm:STM1946"/>
<dbReference type="PATRIC" id="fig|99287.12.peg.2060"/>
<dbReference type="HOGENOM" id="CLU_014841_3_0_6"/>
<dbReference type="PhylomeDB" id="O66041"/>
<dbReference type="BioCyc" id="SENT99287:STM1946-MONOMER"/>
<dbReference type="Proteomes" id="UP000001014">
    <property type="component" value="Chromosome"/>
</dbReference>
<dbReference type="GO" id="GO:0005737">
    <property type="term" value="C:cytoplasm"/>
    <property type="evidence" value="ECO:0007669"/>
    <property type="project" value="UniProtKB-SubCell"/>
</dbReference>
<dbReference type="GO" id="GO:0009380">
    <property type="term" value="C:excinuclease repair complex"/>
    <property type="evidence" value="ECO:0000318"/>
    <property type="project" value="GO_Central"/>
</dbReference>
<dbReference type="GO" id="GO:0003677">
    <property type="term" value="F:DNA binding"/>
    <property type="evidence" value="ECO:0007669"/>
    <property type="project" value="UniProtKB-UniRule"/>
</dbReference>
<dbReference type="GO" id="GO:0009381">
    <property type="term" value="F:excinuclease ABC activity"/>
    <property type="evidence" value="ECO:0007669"/>
    <property type="project" value="UniProtKB-UniRule"/>
</dbReference>
<dbReference type="GO" id="GO:0006974">
    <property type="term" value="P:DNA damage response"/>
    <property type="evidence" value="ECO:0000318"/>
    <property type="project" value="GO_Central"/>
</dbReference>
<dbReference type="GO" id="GO:0006289">
    <property type="term" value="P:nucleotide-excision repair"/>
    <property type="evidence" value="ECO:0007669"/>
    <property type="project" value="UniProtKB-UniRule"/>
</dbReference>
<dbReference type="GO" id="GO:0009432">
    <property type="term" value="P:SOS response"/>
    <property type="evidence" value="ECO:0007669"/>
    <property type="project" value="UniProtKB-UniRule"/>
</dbReference>
<dbReference type="CDD" id="cd10434">
    <property type="entry name" value="GIY-YIG_UvrC_Cho"/>
    <property type="match status" value="1"/>
</dbReference>
<dbReference type="FunFam" id="1.10.150.20:FF:000005">
    <property type="entry name" value="UvrABC system protein C"/>
    <property type="match status" value="1"/>
</dbReference>
<dbReference type="FunFam" id="3.30.420.340:FF:000001">
    <property type="entry name" value="UvrABC system protein C"/>
    <property type="match status" value="1"/>
</dbReference>
<dbReference type="FunFam" id="3.40.1440.10:FF:000001">
    <property type="entry name" value="UvrABC system protein C"/>
    <property type="match status" value="1"/>
</dbReference>
<dbReference type="FunFam" id="4.10.860.10:FF:000002">
    <property type="entry name" value="UvrABC system protein C"/>
    <property type="match status" value="1"/>
</dbReference>
<dbReference type="Gene3D" id="1.10.150.20">
    <property type="entry name" value="5' to 3' exonuclease, C-terminal subdomain"/>
    <property type="match status" value="1"/>
</dbReference>
<dbReference type="Gene3D" id="3.40.1440.10">
    <property type="entry name" value="GIY-YIG endonuclease"/>
    <property type="match status" value="1"/>
</dbReference>
<dbReference type="Gene3D" id="4.10.860.10">
    <property type="entry name" value="UVR domain"/>
    <property type="match status" value="1"/>
</dbReference>
<dbReference type="Gene3D" id="3.30.420.340">
    <property type="entry name" value="UvrC, RNAse H endonuclease domain"/>
    <property type="match status" value="1"/>
</dbReference>
<dbReference type="HAMAP" id="MF_00203">
    <property type="entry name" value="UvrC"/>
    <property type="match status" value="1"/>
</dbReference>
<dbReference type="InterPro" id="IPR000305">
    <property type="entry name" value="GIY-YIG_endonuc"/>
</dbReference>
<dbReference type="InterPro" id="IPR035901">
    <property type="entry name" value="GIY-YIG_endonuc_sf"/>
</dbReference>
<dbReference type="InterPro" id="IPR047296">
    <property type="entry name" value="GIY-YIG_UvrC_Cho"/>
</dbReference>
<dbReference type="InterPro" id="IPR003583">
    <property type="entry name" value="Hlx-hairpin-Hlx_DNA-bd_motif"/>
</dbReference>
<dbReference type="InterPro" id="IPR010994">
    <property type="entry name" value="RuvA_2-like"/>
</dbReference>
<dbReference type="InterPro" id="IPR001943">
    <property type="entry name" value="UVR_dom"/>
</dbReference>
<dbReference type="InterPro" id="IPR036876">
    <property type="entry name" value="UVR_dom_sf"/>
</dbReference>
<dbReference type="InterPro" id="IPR050066">
    <property type="entry name" value="UvrABC_protein_C"/>
</dbReference>
<dbReference type="InterPro" id="IPR004791">
    <property type="entry name" value="UvrC"/>
</dbReference>
<dbReference type="InterPro" id="IPR001162">
    <property type="entry name" value="UvrC_RNase_H_dom"/>
</dbReference>
<dbReference type="InterPro" id="IPR038476">
    <property type="entry name" value="UvrC_RNase_H_dom_sf"/>
</dbReference>
<dbReference type="NCBIfam" id="NF001824">
    <property type="entry name" value="PRK00558.1-5"/>
    <property type="match status" value="1"/>
</dbReference>
<dbReference type="NCBIfam" id="TIGR00194">
    <property type="entry name" value="uvrC"/>
    <property type="match status" value="1"/>
</dbReference>
<dbReference type="PANTHER" id="PTHR30562:SF1">
    <property type="entry name" value="UVRABC SYSTEM PROTEIN C"/>
    <property type="match status" value="1"/>
</dbReference>
<dbReference type="PANTHER" id="PTHR30562">
    <property type="entry name" value="UVRC/OXIDOREDUCTASE"/>
    <property type="match status" value="1"/>
</dbReference>
<dbReference type="Pfam" id="PF01541">
    <property type="entry name" value="GIY-YIG"/>
    <property type="match status" value="1"/>
</dbReference>
<dbReference type="Pfam" id="PF14520">
    <property type="entry name" value="HHH_5"/>
    <property type="match status" value="1"/>
</dbReference>
<dbReference type="Pfam" id="PF02151">
    <property type="entry name" value="UVR"/>
    <property type="match status" value="1"/>
</dbReference>
<dbReference type="Pfam" id="PF22920">
    <property type="entry name" value="UvrC_RNaseH"/>
    <property type="match status" value="1"/>
</dbReference>
<dbReference type="Pfam" id="PF08459">
    <property type="entry name" value="UvrC_RNaseH_dom"/>
    <property type="match status" value="1"/>
</dbReference>
<dbReference type="SMART" id="SM00465">
    <property type="entry name" value="GIYc"/>
    <property type="match status" value="1"/>
</dbReference>
<dbReference type="SMART" id="SM00278">
    <property type="entry name" value="HhH1"/>
    <property type="match status" value="2"/>
</dbReference>
<dbReference type="SUPFAM" id="SSF46600">
    <property type="entry name" value="C-terminal UvrC-binding domain of UvrB"/>
    <property type="match status" value="1"/>
</dbReference>
<dbReference type="SUPFAM" id="SSF82771">
    <property type="entry name" value="GIY-YIG endonuclease"/>
    <property type="match status" value="1"/>
</dbReference>
<dbReference type="SUPFAM" id="SSF47781">
    <property type="entry name" value="RuvA domain 2-like"/>
    <property type="match status" value="1"/>
</dbReference>
<dbReference type="PROSITE" id="PS50164">
    <property type="entry name" value="GIY_YIG"/>
    <property type="match status" value="1"/>
</dbReference>
<dbReference type="PROSITE" id="PS50151">
    <property type="entry name" value="UVR"/>
    <property type="match status" value="1"/>
</dbReference>
<dbReference type="PROSITE" id="PS50165">
    <property type="entry name" value="UVRC"/>
    <property type="match status" value="1"/>
</dbReference>
<sequence length="610" mass="68034">MSEIFDAKAFLKTVTSQPGVYRMYDAGGTVIYVGKAKDLKKRLSSYFRSNLASRKTEALVAQIQHIDVTVTHTETEALLLEHNYIKLYQPRYNVLLRDDKSYPFIFLSGDTHPRLAMHRGAKHAKGEYFGPFPNGYAVRETLALLQKIFPIRQCENSVYRNRSRPCLQYQIGRCLGPCVAGLVSEEEYAQQVEYVRLFLSGKDDQVLTQLIARMEKASQDLAFEEAARIRDQIQAVRRVTEKQFVSNAGDDLDVIGVAFDAGMACVHVLFIRQGKVLGSRSYFPKVPGGTELGEVVETFVGQFYLQGSQMRTLPGEILLDFNLSDKTLLADSLSELAGRRIHVQTKPRGDRARYLKLARTNAATALITKLSQQSTITQRLSALAAVLKLPAIKRMECFDISHTMGEQTVASCVVFDANGPLRAEYRRYNIAGITPGDDYAAMNQVLRRRYGKAIEESKIPDVILIDGGKGQLAQAKAVFAELDVPWDKHRPLLLGVAKGADRKAGLETLFFEPEGEGFSLPPDSPALHVIQHIRDESHDHAIGGHRKKRAKVKNTSTLETIEGVGPKRRQMLLKYMGGLQGLRNASVEEIAKVPGISQGLAEKIFWSLKH</sequence>
<organism>
    <name type="scientific">Salmonella typhimurium (strain LT2 / SGSC1412 / ATCC 700720)</name>
    <dbReference type="NCBI Taxonomy" id="99287"/>
    <lineage>
        <taxon>Bacteria</taxon>
        <taxon>Pseudomonadati</taxon>
        <taxon>Pseudomonadota</taxon>
        <taxon>Gammaproteobacteria</taxon>
        <taxon>Enterobacterales</taxon>
        <taxon>Enterobacteriaceae</taxon>
        <taxon>Salmonella</taxon>
    </lineage>
</organism>
<evidence type="ECO:0000255" key="1">
    <source>
        <dbReference type="HAMAP-Rule" id="MF_00203"/>
    </source>
</evidence>
<evidence type="ECO:0000305" key="2"/>